<accession>Q99ML8</accession>
<accession>F8WIL4</accession>
<gene>
    <name type="primary">Ucn2</name>
</gene>
<sequence length="113" mass="12310">MMTRWALVVFVVLMLDRILFVPGTPIPTFQLLPQNSLETTPSSVTSESSSGTTTGPSASWSNSKASPYLDTRVILSLDVPIGLLRILLEQARYKAARNQAATNAQILAHVGRR</sequence>
<evidence type="ECO:0000250" key="1"/>
<evidence type="ECO:0000256" key="2">
    <source>
        <dbReference type="SAM" id="MobiDB-lite"/>
    </source>
</evidence>
<evidence type="ECO:0000269" key="3">
    <source>
    </source>
</evidence>
<evidence type="ECO:0000305" key="4"/>
<comment type="function">
    <text evidence="1">Suppresses food intake, delays gastric emptying and decreases heat-induced edema. Might represent an endogenous ligand for maintaining homeostasis after stress (By similarity).</text>
</comment>
<comment type="subunit">
    <text evidence="1">Binds with high affinity to CRF receptors 2-alpha and 2-beta.</text>
</comment>
<comment type="subcellular location">
    <subcellularLocation>
        <location evidence="3">Secreted</location>
    </subcellularLocation>
</comment>
<comment type="PTM">
    <text evidence="3">Glycosylated.</text>
</comment>
<comment type="similarity">
    <text evidence="4">Belongs to the sauvagine/corticotropin-releasing factor/urotensin I family.</text>
</comment>
<reference key="1">
    <citation type="journal article" date="2009" name="PLoS Biol.">
        <title>Lineage-specific biology revealed by a finished genome assembly of the mouse.</title>
        <authorList>
            <person name="Church D.M."/>
            <person name="Goodstadt L."/>
            <person name="Hillier L.W."/>
            <person name="Zody M.C."/>
            <person name="Goldstein S."/>
            <person name="She X."/>
            <person name="Bult C.J."/>
            <person name="Agarwala R."/>
            <person name="Cherry J.L."/>
            <person name="DiCuccio M."/>
            <person name="Hlavina W."/>
            <person name="Kapustin Y."/>
            <person name="Meric P."/>
            <person name="Maglott D."/>
            <person name="Birtle Z."/>
            <person name="Marques A.C."/>
            <person name="Graves T."/>
            <person name="Zhou S."/>
            <person name="Teague B."/>
            <person name="Potamousis K."/>
            <person name="Churas C."/>
            <person name="Place M."/>
            <person name="Herschleb J."/>
            <person name="Runnheim R."/>
            <person name="Forrest D."/>
            <person name="Amos-Landgraf J."/>
            <person name="Schwartz D.C."/>
            <person name="Cheng Z."/>
            <person name="Lindblad-Toh K."/>
            <person name="Eichler E.E."/>
            <person name="Ponting C.P."/>
        </authorList>
    </citation>
    <scope>NUCLEOTIDE SEQUENCE [LARGE SCALE GENOMIC DNA]</scope>
    <source>
        <strain>C57BL/6J</strain>
    </source>
</reference>
<reference key="2">
    <citation type="journal article" date="2001" name="Proc. Natl. Acad. Sci. U.S.A.">
        <title>Urocortin II: a member of the corticotropin-releasing factor (CRF) neuropeptide family that is selectively bound by type 2 CRF receptors.</title>
        <authorList>
            <person name="Reyes T.M."/>
            <person name="Lewis K."/>
            <person name="Perrin M.H."/>
            <person name="Kunitake K.S."/>
            <person name="Vaughan J."/>
            <person name="Arias C.A."/>
            <person name="Hogenesch J.B."/>
            <person name="Gulyas J."/>
            <person name="Rivier J."/>
            <person name="Vale W.W."/>
            <person name="Sawchenko P.E."/>
        </authorList>
    </citation>
    <scope>NUCLEOTIDE SEQUENCE [MRNA] OF 2-113</scope>
    <source>
        <strain>BALB/cJ</strain>
    </source>
</reference>
<reference key="3">
    <citation type="journal article" date="2013" name="Endocrinology">
        <title>Posttranslational processing of human and mouse urocortin 2: characterization and bioactivity of gene products.</title>
        <authorList>
            <person name="Vaughan J.M."/>
            <person name="Donaldson C.J."/>
            <person name="Fischer W.H."/>
            <person name="Perrin M.H."/>
            <person name="Rivier J.E."/>
            <person name="Sawchenko P.E."/>
            <person name="Vale W.W."/>
        </authorList>
    </citation>
    <scope>PROTEIN SEQUENCE OF N-TERMINUS</scope>
    <scope>SUBCELLULAR LOCATION</scope>
    <scope>SIGNAL SEQUENCE CLEAVAGE SITE</scope>
    <scope>GLYCOSYLATION</scope>
    <scope>AMIDATION AT VAL-110</scope>
</reference>
<keyword id="KW-0027">Amidation</keyword>
<keyword id="KW-0903">Direct protein sequencing</keyword>
<keyword id="KW-0325">Glycoprotein</keyword>
<keyword id="KW-0372">Hormone</keyword>
<keyword id="KW-1185">Reference proteome</keyword>
<keyword id="KW-0964">Secreted</keyword>
<keyword id="KW-0732">Signal</keyword>
<dbReference type="EMBL" id="AC140383">
    <property type="status" value="NOT_ANNOTATED_CDS"/>
    <property type="molecule type" value="Genomic_DNA"/>
</dbReference>
<dbReference type="EMBL" id="AF331517">
    <property type="protein sequence ID" value="AAK16157.1"/>
    <property type="molecule type" value="mRNA"/>
</dbReference>
<dbReference type="CCDS" id="CCDS52929.1"/>
<dbReference type="RefSeq" id="NP_659543.1">
    <property type="nucleotide sequence ID" value="NM_145077.1"/>
</dbReference>
<dbReference type="SMR" id="Q99ML8"/>
<dbReference type="BioGRID" id="228607">
    <property type="interactions" value="2"/>
</dbReference>
<dbReference type="FunCoup" id="Q99ML8">
    <property type="interactions" value="585"/>
</dbReference>
<dbReference type="STRING" id="10090.ENSMUSP00000060405"/>
<dbReference type="PaxDb" id="10090-ENSMUSP00000060405"/>
<dbReference type="Antibodypedia" id="55296">
    <property type="antibodies" value="196 antibodies from 24 providers"/>
</dbReference>
<dbReference type="Ensembl" id="ENSMUST00000052724.5">
    <property type="protein sequence ID" value="ENSMUSP00000060405.4"/>
    <property type="gene ID" value="ENSMUSG00000049699.5"/>
</dbReference>
<dbReference type="GeneID" id="171530"/>
<dbReference type="KEGG" id="mmu:171530"/>
<dbReference type="UCSC" id="uc012hax.1">
    <property type="organism name" value="mouse"/>
</dbReference>
<dbReference type="AGR" id="MGI:2176375"/>
<dbReference type="CTD" id="90226"/>
<dbReference type="MGI" id="MGI:2176375">
    <property type="gene designation" value="Ucn2"/>
</dbReference>
<dbReference type="VEuPathDB" id="HostDB:ENSMUSG00000049699"/>
<dbReference type="eggNOG" id="ENOG502R23K">
    <property type="taxonomic scope" value="Eukaryota"/>
</dbReference>
<dbReference type="GeneTree" id="ENSGT00940000160568"/>
<dbReference type="HOGENOM" id="CLU_2145078_0_0_1"/>
<dbReference type="InParanoid" id="Q99ML8"/>
<dbReference type="OMA" id="TWPWAAQ"/>
<dbReference type="OrthoDB" id="9837679at2759"/>
<dbReference type="PhylomeDB" id="Q99ML8"/>
<dbReference type="TreeFam" id="TF330723"/>
<dbReference type="Reactome" id="R-MMU-373080">
    <property type="pathway name" value="Class B/2 (Secretin family receptors)"/>
</dbReference>
<dbReference type="BioGRID-ORCS" id="171530">
    <property type="hits" value="4 hits in 79 CRISPR screens"/>
</dbReference>
<dbReference type="PRO" id="PR:Q99ML8"/>
<dbReference type="Proteomes" id="UP000000589">
    <property type="component" value="Chromosome 9"/>
</dbReference>
<dbReference type="RNAct" id="Q99ML8">
    <property type="molecule type" value="protein"/>
</dbReference>
<dbReference type="Bgee" id="ENSMUSG00000049699">
    <property type="expression patterns" value="Expressed in saccule of membranous labyrinth and 30 other cell types or tissues"/>
</dbReference>
<dbReference type="GO" id="GO:0005615">
    <property type="term" value="C:extracellular space"/>
    <property type="evidence" value="ECO:0007669"/>
    <property type="project" value="InterPro"/>
</dbReference>
<dbReference type="GO" id="GO:0051431">
    <property type="term" value="F:corticotropin-releasing hormone receptor 2 binding"/>
    <property type="evidence" value="ECO:0007669"/>
    <property type="project" value="InterPro"/>
</dbReference>
<dbReference type="GO" id="GO:0051429">
    <property type="term" value="F:corticotropin-releasing hormone receptor binding"/>
    <property type="evidence" value="ECO:0000250"/>
    <property type="project" value="UniProtKB"/>
</dbReference>
<dbReference type="GO" id="GO:0001664">
    <property type="term" value="F:G protein-coupled receptor binding"/>
    <property type="evidence" value="ECO:0000314"/>
    <property type="project" value="MGI"/>
</dbReference>
<dbReference type="GO" id="GO:0005179">
    <property type="term" value="F:hormone activity"/>
    <property type="evidence" value="ECO:0007669"/>
    <property type="project" value="UniProtKB-KW"/>
</dbReference>
<dbReference type="GO" id="GO:0042562">
    <property type="term" value="F:hormone binding"/>
    <property type="evidence" value="ECO:0007669"/>
    <property type="project" value="Ensembl"/>
</dbReference>
<dbReference type="GO" id="GO:0007189">
    <property type="term" value="P:adenylate cyclase-activating G protein-coupled receptor signaling pathway"/>
    <property type="evidence" value="ECO:0007669"/>
    <property type="project" value="Ensembl"/>
</dbReference>
<dbReference type="GO" id="GO:0007586">
    <property type="term" value="P:digestion"/>
    <property type="evidence" value="ECO:0007669"/>
    <property type="project" value="InterPro"/>
</dbReference>
<dbReference type="GO" id="GO:0009755">
    <property type="term" value="P:hormone-mediated signaling pathway"/>
    <property type="evidence" value="ECO:0000250"/>
    <property type="project" value="UniProtKB"/>
</dbReference>
<dbReference type="InterPro" id="IPR000187">
    <property type="entry name" value="CRF"/>
</dbReference>
<dbReference type="InterPro" id="IPR024270">
    <property type="entry name" value="Urocortin_II/III"/>
</dbReference>
<dbReference type="PANTHER" id="PTHR17575:SF0">
    <property type="entry name" value="UROCORTIN-2"/>
    <property type="match status" value="1"/>
</dbReference>
<dbReference type="PANTHER" id="PTHR17575">
    <property type="entry name" value="UROCORTIN-2 AND 3"/>
    <property type="match status" value="1"/>
</dbReference>
<dbReference type="Pfam" id="PF00473">
    <property type="entry name" value="CRF"/>
    <property type="match status" value="1"/>
</dbReference>
<protein>
    <recommendedName>
        <fullName>Urocortin-2</fullName>
    </recommendedName>
    <alternativeName>
        <fullName>Urocortin II</fullName>
        <shortName>Ucn II</shortName>
    </alternativeName>
</protein>
<organism>
    <name type="scientific">Mus musculus</name>
    <name type="common">Mouse</name>
    <dbReference type="NCBI Taxonomy" id="10090"/>
    <lineage>
        <taxon>Eukaryota</taxon>
        <taxon>Metazoa</taxon>
        <taxon>Chordata</taxon>
        <taxon>Craniata</taxon>
        <taxon>Vertebrata</taxon>
        <taxon>Euteleostomi</taxon>
        <taxon>Mammalia</taxon>
        <taxon>Eutheria</taxon>
        <taxon>Euarchontoglires</taxon>
        <taxon>Glires</taxon>
        <taxon>Rodentia</taxon>
        <taxon>Myomorpha</taxon>
        <taxon>Muroidea</taxon>
        <taxon>Muridae</taxon>
        <taxon>Murinae</taxon>
        <taxon>Mus</taxon>
        <taxon>Mus</taxon>
    </lineage>
</organism>
<proteinExistence type="evidence at protein level"/>
<feature type="signal peptide" evidence="3">
    <location>
        <begin position="1"/>
        <end position="23"/>
    </location>
</feature>
<feature type="propeptide" id="PRO_0000006241" evidence="3">
    <location>
        <begin position="24"/>
        <end position="71"/>
    </location>
</feature>
<feature type="chain" id="PRO_0000006242" description="Urocortin-2">
    <location>
        <begin position="73"/>
        <end position="110"/>
    </location>
</feature>
<feature type="region of interest" description="Disordered" evidence="2">
    <location>
        <begin position="37"/>
        <end position="64"/>
    </location>
</feature>
<feature type="compositionally biased region" description="Low complexity" evidence="2">
    <location>
        <begin position="37"/>
        <end position="61"/>
    </location>
</feature>
<feature type="modified residue" description="Valine amide; partial" evidence="3">
    <location>
        <position position="110"/>
    </location>
</feature>
<name>UCN2_MOUSE</name>